<evidence type="ECO:0000250" key="1"/>
<evidence type="ECO:0000250" key="2">
    <source>
        <dbReference type="UniProtKB" id="P35858"/>
    </source>
</evidence>
<evidence type="ECO:0000255" key="3"/>
<gene>
    <name type="primary">IGFALS</name>
    <name type="synonym">ALS</name>
</gene>
<dbReference type="EMBL" id="S83462">
    <property type="protein sequence ID" value="AAN86722.1"/>
    <property type="molecule type" value="mRNA"/>
</dbReference>
<dbReference type="SMR" id="O02833"/>
<dbReference type="GlyCosmos" id="O02833">
    <property type="glycosylation" value="6 sites, No reported glycans"/>
</dbReference>
<dbReference type="GO" id="GO:0031012">
    <property type="term" value="C:extracellular matrix"/>
    <property type="evidence" value="ECO:0007669"/>
    <property type="project" value="TreeGrafter"/>
</dbReference>
<dbReference type="GO" id="GO:0042567">
    <property type="term" value="C:insulin-like growth factor ternary complex"/>
    <property type="evidence" value="ECO:0007669"/>
    <property type="project" value="TreeGrafter"/>
</dbReference>
<dbReference type="GO" id="GO:0005520">
    <property type="term" value="F:insulin-like growth factor binding"/>
    <property type="evidence" value="ECO:0007669"/>
    <property type="project" value="TreeGrafter"/>
</dbReference>
<dbReference type="GO" id="GO:0007155">
    <property type="term" value="P:cell adhesion"/>
    <property type="evidence" value="ECO:0007669"/>
    <property type="project" value="UniProtKB-KW"/>
</dbReference>
<dbReference type="FunFam" id="3.80.10.10:FF:000540">
    <property type="entry name" value="Insulin-like growth factor-binding protein complex acid labile subunit"/>
    <property type="match status" value="1"/>
</dbReference>
<dbReference type="FunFam" id="3.80.10.10:FF:001833">
    <property type="entry name" value="Insulin-like growth factor-binding protein complex acid labile subunit"/>
    <property type="match status" value="1"/>
</dbReference>
<dbReference type="FunFam" id="3.80.10.10:FF:000770">
    <property type="entry name" value="Uncharacterized protein"/>
    <property type="match status" value="1"/>
</dbReference>
<dbReference type="Gene3D" id="3.80.10.10">
    <property type="entry name" value="Ribonuclease Inhibitor"/>
    <property type="match status" value="3"/>
</dbReference>
<dbReference type="InterPro" id="IPR000483">
    <property type="entry name" value="Cys-rich_flank_reg_C"/>
</dbReference>
<dbReference type="InterPro" id="IPR050328">
    <property type="entry name" value="Dev_Immune_Receptor"/>
</dbReference>
<dbReference type="InterPro" id="IPR001611">
    <property type="entry name" value="Leu-rich_rpt"/>
</dbReference>
<dbReference type="InterPro" id="IPR003591">
    <property type="entry name" value="Leu-rich_rpt_typical-subtyp"/>
</dbReference>
<dbReference type="InterPro" id="IPR032675">
    <property type="entry name" value="LRR_dom_sf"/>
</dbReference>
<dbReference type="InterPro" id="IPR000372">
    <property type="entry name" value="LRRNT"/>
</dbReference>
<dbReference type="PANTHER" id="PTHR24373:SF285">
    <property type="entry name" value="INSULIN-LIKE GROWTH FACTOR-BINDING PROTEIN COMPLEX ACID LABILE SUBUNIT"/>
    <property type="match status" value="1"/>
</dbReference>
<dbReference type="PANTHER" id="PTHR24373">
    <property type="entry name" value="SLIT RELATED LEUCINE-RICH REPEAT NEURONAL PROTEIN"/>
    <property type="match status" value="1"/>
</dbReference>
<dbReference type="Pfam" id="PF13855">
    <property type="entry name" value="LRR_8"/>
    <property type="match status" value="6"/>
</dbReference>
<dbReference type="Pfam" id="PF01462">
    <property type="entry name" value="LRRNT"/>
    <property type="match status" value="1"/>
</dbReference>
<dbReference type="SMART" id="SM00369">
    <property type="entry name" value="LRR_TYP"/>
    <property type="match status" value="19"/>
</dbReference>
<dbReference type="SMART" id="SM00082">
    <property type="entry name" value="LRRCT"/>
    <property type="match status" value="1"/>
</dbReference>
<dbReference type="SMART" id="SM00013">
    <property type="entry name" value="LRRNT"/>
    <property type="match status" value="1"/>
</dbReference>
<dbReference type="SUPFAM" id="SSF52058">
    <property type="entry name" value="L domain-like"/>
    <property type="match status" value="2"/>
</dbReference>
<dbReference type="PROSITE" id="PS51450">
    <property type="entry name" value="LRR"/>
    <property type="match status" value="18"/>
</dbReference>
<name>ALS_PAPHA</name>
<reference key="1">
    <citation type="journal article" date="1996" name="Biochem. Biophys. Res. Commun.">
        <title>The cloning and expression of the baboon acid-labile subunit of the insulin-like growth factor binding protein complex.</title>
        <authorList>
            <person name="Delhanty P."/>
            <person name="Baxter R.C."/>
        </authorList>
    </citation>
    <scope>NUCLEOTIDE SEQUENCE [MRNA]</scope>
    <source>
        <tissue>Liver</tissue>
    </source>
</reference>
<protein>
    <recommendedName>
        <fullName>Insulin-like growth factor-binding protein complex acid labile subunit</fullName>
        <shortName>ALS</shortName>
    </recommendedName>
</protein>
<keyword id="KW-0130">Cell adhesion</keyword>
<keyword id="KW-1015">Disulfide bond</keyword>
<keyword id="KW-0325">Glycoprotein</keyword>
<keyword id="KW-0433">Leucine-rich repeat</keyword>
<keyword id="KW-0677">Repeat</keyword>
<keyword id="KW-0964">Secreted</keyword>
<keyword id="KW-0732">Signal</keyword>
<organism>
    <name type="scientific">Papio hamadryas</name>
    <name type="common">Hamadryas baboon</name>
    <dbReference type="NCBI Taxonomy" id="9557"/>
    <lineage>
        <taxon>Eukaryota</taxon>
        <taxon>Metazoa</taxon>
        <taxon>Chordata</taxon>
        <taxon>Craniata</taxon>
        <taxon>Vertebrata</taxon>
        <taxon>Euteleostomi</taxon>
        <taxon>Mammalia</taxon>
        <taxon>Eutheria</taxon>
        <taxon>Euarchontoglires</taxon>
        <taxon>Primates</taxon>
        <taxon>Haplorrhini</taxon>
        <taxon>Catarrhini</taxon>
        <taxon>Cercopithecidae</taxon>
        <taxon>Cercopithecinae</taxon>
        <taxon>Papio</taxon>
    </lineage>
</organism>
<feature type="signal peptide" evidence="1">
    <location>
        <begin position="1"/>
        <end position="27"/>
    </location>
</feature>
<feature type="chain" id="PRO_0000020697" description="Insulin-like growth factor-binding protein complex acid labile subunit">
    <location>
        <begin position="28"/>
        <end position="605"/>
    </location>
</feature>
<feature type="domain" description="LRRNT">
    <location>
        <begin position="32"/>
        <end position="74"/>
    </location>
</feature>
<feature type="repeat" description="LRR 1">
    <location>
        <begin position="75"/>
        <end position="96"/>
    </location>
</feature>
<feature type="repeat" description="LRR 2">
    <location>
        <begin position="99"/>
        <end position="120"/>
    </location>
</feature>
<feature type="repeat" description="LRR 3">
    <location>
        <begin position="123"/>
        <end position="144"/>
    </location>
</feature>
<feature type="repeat" description="LRR 4">
    <location>
        <begin position="147"/>
        <end position="168"/>
    </location>
</feature>
<feature type="repeat" description="LRR 5">
    <location>
        <begin position="171"/>
        <end position="192"/>
    </location>
</feature>
<feature type="repeat" description="LRR 6">
    <location>
        <begin position="195"/>
        <end position="216"/>
    </location>
</feature>
<feature type="repeat" description="LRR 7">
    <location>
        <begin position="219"/>
        <end position="240"/>
    </location>
</feature>
<feature type="repeat" description="LRR 8">
    <location>
        <begin position="243"/>
        <end position="264"/>
    </location>
</feature>
<feature type="repeat" description="LRR 9">
    <location>
        <begin position="267"/>
        <end position="288"/>
    </location>
</feature>
<feature type="repeat" description="LRR 10">
    <location>
        <begin position="291"/>
        <end position="312"/>
    </location>
</feature>
<feature type="repeat" description="LRR 11">
    <location>
        <begin position="315"/>
        <end position="336"/>
    </location>
</feature>
<feature type="repeat" description="LRR 12">
    <location>
        <begin position="339"/>
        <end position="360"/>
    </location>
</feature>
<feature type="repeat" description="LRR 13">
    <location>
        <begin position="363"/>
        <end position="384"/>
    </location>
</feature>
<feature type="repeat" description="LRR 14">
    <location>
        <begin position="387"/>
        <end position="408"/>
    </location>
</feature>
<feature type="repeat" description="LRR 15">
    <location>
        <begin position="411"/>
        <end position="432"/>
    </location>
</feature>
<feature type="repeat" description="LRR 16">
    <location>
        <begin position="435"/>
        <end position="456"/>
    </location>
</feature>
<feature type="repeat" description="LRR 17">
    <location>
        <begin position="459"/>
        <end position="480"/>
    </location>
</feature>
<feature type="repeat" description="LRR 18">
    <location>
        <begin position="483"/>
        <end position="504"/>
    </location>
</feature>
<feature type="repeat" description="LRR 19">
    <location>
        <begin position="507"/>
        <end position="528"/>
    </location>
</feature>
<feature type="domain" description="LRRCT">
    <location>
        <begin position="536"/>
        <end position="605"/>
    </location>
</feature>
<feature type="glycosylation site" description="N-linked (GlcNAc...) asparagine" evidence="3">
    <location>
        <position position="64"/>
    </location>
</feature>
<feature type="glycosylation site" description="N-linked (GlcNAc...) asparagine" evidence="3">
    <location>
        <position position="85"/>
    </location>
</feature>
<feature type="glycosylation site" description="N-linked (GlcNAc...) asparagine" evidence="3">
    <location>
        <position position="96"/>
    </location>
</feature>
<feature type="glycosylation site" description="N-linked (GlcNAc...) asparagine" evidence="3">
    <location>
        <position position="368"/>
    </location>
</feature>
<feature type="glycosylation site" description="N-linked (GlcNAc...) asparagine" evidence="3">
    <location>
        <position position="515"/>
    </location>
</feature>
<feature type="glycosylation site" description="N-linked (GlcNAc...) asparagine" evidence="3">
    <location>
        <position position="580"/>
    </location>
</feature>
<feature type="disulfide bond" evidence="2">
    <location>
        <begin position="41"/>
        <end position="47"/>
    </location>
</feature>
<feature type="disulfide bond" evidence="2">
    <location>
        <begin position="45"/>
        <end position="60"/>
    </location>
</feature>
<feature type="disulfide bond" evidence="2">
    <location>
        <begin position="540"/>
        <end position="583"/>
    </location>
</feature>
<feature type="disulfide bond" evidence="2">
    <location>
        <begin position="542"/>
        <end position="605"/>
    </location>
</feature>
<feature type="disulfide bond" evidence="2">
    <location>
        <begin position="566"/>
        <end position="571"/>
    </location>
</feature>
<sequence length="605" mass="66111">MALRKGGLALALLLLSWVALGPRSLEGAEPGTPGEAEGPACPATCACSYDDEVNELSVFCSSRNLTRLPDGIPGGTQALWLDSNNLSSIPPAAFRNLSSLAFLNLQGGQLGSLEPQALLGLENLCHLHLERNQLRSLAVGTFAYTPALALLGLSNNRLSRLEDGLFEGLGNLWDLNLGWNSLAVLPDAAFRGLGGLRELVLAGNRLAYLQPALFSGLAELRELDLSRNALRAIKANVFAQLPRLQKLYLDRNLIAAVAPGAFLGLKALRWLDLSHNRVAGLLEDTFPGLLGLRVLRLSHNAIASLRPRTFEDLHFLEELQLGHNRIRQLAERSFEGLGQLEVLTLDHNQLQEVKVGAFLGLTNVAVMNLSGNCLRNLPEQVFRGLGKLHSLHLEGSCLGRIRPHTFAGLSGLRRLFLKDNGLVGIEEQSLWGLAELLELDLTSNQLTHLPHQLFQGLGKLEYLLLSHNRLAELPADALGPLQRAFWLDVSHNRLEALPGSLLASLGRLRYLNLRNNSLRTFTPQPPGLERLWLEGNPWDCSCPLKALRDFALQNPSAVPRFVQAICEGDDCQPPVYTYNNITCASPPEVAGLDLRDLGEAHFAPC</sequence>
<comment type="function">
    <text>Involved in protein-protein interactions that result in protein complexes, receptor-ligand binding or cell adhesion.</text>
</comment>
<comment type="subunit">
    <text evidence="2">Forms a ternary complex with IGF1 and IGFBP3.</text>
</comment>
<comment type="subcellular location">
    <subcellularLocation>
        <location>Secreted</location>
        <location>Extracellular space</location>
    </subcellularLocation>
</comment>
<accession>O02833</accession>
<proteinExistence type="evidence at transcript level"/>